<comment type="function">
    <text evidence="1">Binds and compact DNA (95 to 150 base pairs) to form nucleosome-like structures that contain positive DNA supercoils. Increases the resistance of DNA to thermal denaturation (in vitro).</text>
</comment>
<comment type="subunit">
    <text evidence="1">Homodimer or heterodimer with another histone. Dimers then assemble into higher oligomers, with the DNA wrapped around the protein core (By similarity).</text>
</comment>
<comment type="subcellular location">
    <subcellularLocation>
        <location evidence="2">Cytoplasm</location>
    </subcellularLocation>
    <subcellularLocation>
        <location evidence="2">Chromosome</location>
    </subcellularLocation>
</comment>
<comment type="similarity">
    <text evidence="2">Belongs to the archaeal histone HMF family.</text>
</comment>
<name>HJA2_METJA</name>
<gene>
    <name type="ordered locus">MJ0932</name>
</gene>
<dbReference type="EMBL" id="L77117">
    <property type="protein sequence ID" value="AAB98934.1"/>
    <property type="molecule type" value="Genomic_DNA"/>
</dbReference>
<dbReference type="PIR" id="D64416">
    <property type="entry name" value="D64416"/>
</dbReference>
<dbReference type="RefSeq" id="WP_010870446.1">
    <property type="nucleotide sequence ID" value="NC_000909.1"/>
</dbReference>
<dbReference type="SMR" id="Q58342"/>
<dbReference type="FunCoup" id="Q58342">
    <property type="interactions" value="3"/>
</dbReference>
<dbReference type="STRING" id="243232.MJ_0932"/>
<dbReference type="PaxDb" id="243232-MJ_0932"/>
<dbReference type="EnsemblBacteria" id="AAB98934">
    <property type="protein sequence ID" value="AAB98934"/>
    <property type="gene ID" value="MJ_0932"/>
</dbReference>
<dbReference type="KEGG" id="mja:MJ_0932"/>
<dbReference type="eggNOG" id="arCOG02144">
    <property type="taxonomic scope" value="Archaea"/>
</dbReference>
<dbReference type="HOGENOM" id="CLU_192667_0_0_2"/>
<dbReference type="InParanoid" id="Q58342"/>
<dbReference type="PhylomeDB" id="Q58342"/>
<dbReference type="Proteomes" id="UP000000805">
    <property type="component" value="Chromosome"/>
</dbReference>
<dbReference type="GO" id="GO:0005694">
    <property type="term" value="C:chromosome"/>
    <property type="evidence" value="ECO:0007669"/>
    <property type="project" value="UniProtKB-SubCell"/>
</dbReference>
<dbReference type="GO" id="GO:0005737">
    <property type="term" value="C:cytoplasm"/>
    <property type="evidence" value="ECO:0007669"/>
    <property type="project" value="UniProtKB-SubCell"/>
</dbReference>
<dbReference type="GO" id="GO:0003677">
    <property type="term" value="F:DNA binding"/>
    <property type="evidence" value="ECO:0007669"/>
    <property type="project" value="UniProtKB-KW"/>
</dbReference>
<dbReference type="GO" id="GO:0046982">
    <property type="term" value="F:protein heterodimerization activity"/>
    <property type="evidence" value="ECO:0007669"/>
    <property type="project" value="InterPro"/>
</dbReference>
<dbReference type="CDD" id="cd22909">
    <property type="entry name" value="HFD_archaea_histone-like"/>
    <property type="match status" value="1"/>
</dbReference>
<dbReference type="Gene3D" id="1.10.20.10">
    <property type="entry name" value="Histone, subunit A"/>
    <property type="match status" value="1"/>
</dbReference>
<dbReference type="InterPro" id="IPR050947">
    <property type="entry name" value="Archaeal_histone_HMF"/>
</dbReference>
<dbReference type="InterPro" id="IPR003958">
    <property type="entry name" value="CBFA_NFYB_domain"/>
</dbReference>
<dbReference type="InterPro" id="IPR009072">
    <property type="entry name" value="Histone-fold"/>
</dbReference>
<dbReference type="InterPro" id="IPR050004">
    <property type="entry name" value="HmfB-like"/>
</dbReference>
<dbReference type="InterPro" id="IPR004823">
    <property type="entry name" value="TAF_TATA-bd_Histone-like_dom"/>
</dbReference>
<dbReference type="NCBIfam" id="NF043032">
    <property type="entry name" value="archaea_histone"/>
    <property type="match status" value="1"/>
</dbReference>
<dbReference type="PANTHER" id="PTHR47828">
    <property type="entry name" value="ARCHAEAL HISTONE A"/>
    <property type="match status" value="1"/>
</dbReference>
<dbReference type="PANTHER" id="PTHR47828:SF1">
    <property type="entry name" value="ARCHAEAL HISTONE A"/>
    <property type="match status" value="1"/>
</dbReference>
<dbReference type="Pfam" id="PF00808">
    <property type="entry name" value="CBFD_NFYB_HMF"/>
    <property type="match status" value="1"/>
</dbReference>
<dbReference type="SMART" id="SM00803">
    <property type="entry name" value="TAF"/>
    <property type="match status" value="1"/>
</dbReference>
<dbReference type="SUPFAM" id="SSF47113">
    <property type="entry name" value="Histone-fold"/>
    <property type="match status" value="1"/>
</dbReference>
<feature type="chain" id="PRO_0000154988" description="Probable archaeal histone 2">
    <location>
        <begin position="1"/>
        <end position="67"/>
    </location>
</feature>
<feature type="region of interest" description="Interaction with DNA" evidence="1">
    <location>
        <begin position="20"/>
        <end position="22"/>
    </location>
</feature>
<feature type="region of interest" description="Interaction with DNA" evidence="1">
    <location>
        <begin position="54"/>
        <end position="57"/>
    </location>
</feature>
<feature type="site" description="Interaction with DNA" evidence="1">
    <location>
        <position position="14"/>
    </location>
</feature>
<sequence>MAELPVAPFERILKKAGAERVSRAAAEYLAEAVEEIALEIAKEAVELAKHAKRKTVKVEDIKLALKQ</sequence>
<organism>
    <name type="scientific">Methanocaldococcus jannaschii (strain ATCC 43067 / DSM 2661 / JAL-1 / JCM 10045 / NBRC 100440)</name>
    <name type="common">Methanococcus jannaschii</name>
    <dbReference type="NCBI Taxonomy" id="243232"/>
    <lineage>
        <taxon>Archaea</taxon>
        <taxon>Methanobacteriati</taxon>
        <taxon>Methanobacteriota</taxon>
        <taxon>Methanomada group</taxon>
        <taxon>Methanococci</taxon>
        <taxon>Methanococcales</taxon>
        <taxon>Methanocaldococcaceae</taxon>
        <taxon>Methanocaldococcus</taxon>
    </lineage>
</organism>
<proteinExistence type="inferred from homology"/>
<reference key="1">
    <citation type="journal article" date="1996" name="Science">
        <title>Complete genome sequence of the methanogenic archaeon, Methanococcus jannaschii.</title>
        <authorList>
            <person name="Bult C.J."/>
            <person name="White O."/>
            <person name="Olsen G.J."/>
            <person name="Zhou L."/>
            <person name="Fleischmann R.D."/>
            <person name="Sutton G.G."/>
            <person name="Blake J.A."/>
            <person name="FitzGerald L.M."/>
            <person name="Clayton R.A."/>
            <person name="Gocayne J.D."/>
            <person name="Kerlavage A.R."/>
            <person name="Dougherty B.A."/>
            <person name="Tomb J.-F."/>
            <person name="Adams M.D."/>
            <person name="Reich C.I."/>
            <person name="Overbeek R."/>
            <person name="Kirkness E.F."/>
            <person name="Weinstock K.G."/>
            <person name="Merrick J.M."/>
            <person name="Glodek A."/>
            <person name="Scott J.L."/>
            <person name="Geoghagen N.S.M."/>
            <person name="Weidman J.F."/>
            <person name="Fuhrmann J.L."/>
            <person name="Nguyen D."/>
            <person name="Utterback T.R."/>
            <person name="Kelley J.M."/>
            <person name="Peterson J.D."/>
            <person name="Sadow P.W."/>
            <person name="Hanna M.C."/>
            <person name="Cotton M.D."/>
            <person name="Roberts K.M."/>
            <person name="Hurst M.A."/>
            <person name="Kaine B.P."/>
            <person name="Borodovsky M."/>
            <person name="Klenk H.-P."/>
            <person name="Fraser C.M."/>
            <person name="Smith H.O."/>
            <person name="Woese C.R."/>
            <person name="Venter J.C."/>
        </authorList>
    </citation>
    <scope>NUCLEOTIDE SEQUENCE [LARGE SCALE GENOMIC DNA]</scope>
    <source>
        <strain>ATCC 43067 / DSM 2661 / JAL-1 / JCM 10045 / NBRC 100440</strain>
    </source>
</reference>
<keyword id="KW-0158">Chromosome</keyword>
<keyword id="KW-0963">Cytoplasm</keyword>
<keyword id="KW-0238">DNA-binding</keyword>
<keyword id="KW-1185">Reference proteome</keyword>
<protein>
    <recommendedName>
        <fullName>Probable archaeal histone 2</fullName>
    </recommendedName>
</protein>
<accession>Q58342</accession>
<evidence type="ECO:0000250" key="1">
    <source>
        <dbReference type="UniProtKB" id="P19267"/>
    </source>
</evidence>
<evidence type="ECO:0000305" key="2"/>